<keyword id="KW-0025">Alternative splicing</keyword>
<keyword id="KW-0903">Direct protein sequencing</keyword>
<keyword id="KW-1015">Disulfide bond</keyword>
<keyword id="KW-0325">Glycoprotein</keyword>
<keyword id="KW-0393">Immunoglobulin domain</keyword>
<keyword id="KW-0472">Membrane</keyword>
<keyword id="KW-1267">Proteomics identification</keyword>
<keyword id="KW-1185">Reference proteome</keyword>
<keyword id="KW-0732">Signal</keyword>
<keyword id="KW-0812">Transmembrane</keyword>
<keyword id="KW-1133">Transmembrane helix</keyword>
<evidence type="ECO:0000255" key="1"/>
<evidence type="ECO:0000255" key="2">
    <source>
        <dbReference type="PROSITE-ProRule" id="PRU00114"/>
    </source>
</evidence>
<evidence type="ECO:0000256" key="3">
    <source>
        <dbReference type="SAM" id="MobiDB-lite"/>
    </source>
</evidence>
<evidence type="ECO:0000269" key="4">
    <source>
    </source>
</evidence>
<evidence type="ECO:0000269" key="5">
    <source>
    </source>
</evidence>
<evidence type="ECO:0000305" key="6"/>
<gene>
    <name type="primary">SLAMF8</name>
    <name type="synonym">BLAME</name>
</gene>
<feature type="signal peptide" evidence="5">
    <location>
        <begin position="1"/>
        <end position="22"/>
    </location>
</feature>
<feature type="chain" id="PRO_0000014965" description="SLAM family member 8">
    <location>
        <begin position="23"/>
        <end position="285"/>
    </location>
</feature>
<feature type="topological domain" description="Extracellular" evidence="1">
    <location>
        <begin position="23"/>
        <end position="233"/>
    </location>
</feature>
<feature type="transmembrane region" description="Helical" evidence="1">
    <location>
        <begin position="234"/>
        <end position="254"/>
    </location>
</feature>
<feature type="topological domain" description="Cytoplasmic" evidence="1">
    <location>
        <begin position="255"/>
        <end position="285"/>
    </location>
</feature>
<feature type="domain" description="Ig-like C2-type">
    <location>
        <begin position="128"/>
        <end position="215"/>
    </location>
</feature>
<feature type="region of interest" description="Disordered" evidence="3">
    <location>
        <begin position="262"/>
        <end position="285"/>
    </location>
</feature>
<feature type="glycosylation site" description="N-linked (GlcNAc...) asparagine" evidence="1">
    <location>
        <position position="85"/>
    </location>
</feature>
<feature type="disulfide bond" evidence="2">
    <location>
        <begin position="152"/>
        <end position="201"/>
    </location>
</feature>
<feature type="splice variant" id="VSP_013896" description="In isoform 2." evidence="6">
    <location>
        <begin position="14"/>
        <end position="122"/>
    </location>
</feature>
<feature type="sequence variant" id="VAR_049940" description="In dbSNP:rs2494514.">
    <original>P</original>
    <variation>T</variation>
    <location>
        <position position="5"/>
    </location>
</feature>
<feature type="sequence variant" id="VAR_049941" description="In dbSNP:rs34687326." evidence="4">
    <original>G</original>
    <variation>S</variation>
    <location>
        <position position="99"/>
    </location>
</feature>
<feature type="sequence variant" id="VAR_049942" description="In dbSNP:rs3795331.">
    <original>V</original>
    <variation>M</variation>
    <location>
        <position position="129"/>
    </location>
</feature>
<accession>Q9P0V8</accession>
<accession>Q32MC6</accession>
<accession>Q5VU15</accession>
<proteinExistence type="evidence at protein level"/>
<reference key="1">
    <citation type="journal article" date="2001" name="J. Immunol.">
        <title>Cloning, expression, and function of BLAME, a novel member of the CD2 family.</title>
        <authorList>
            <person name="Kingsbury G.A."/>
            <person name="Feeney L.A."/>
            <person name="Nong Y."/>
            <person name="Calandra S.A."/>
            <person name="Murphy C.J."/>
            <person name="Corcoran J.M."/>
            <person name="Wang Y."/>
            <person name="Prabhu Das M.R."/>
            <person name="Busfield S.J."/>
            <person name="Fraser C.C."/>
            <person name="Villeval J.-L."/>
        </authorList>
    </citation>
    <scope>NUCLEOTIDE SEQUENCE [MRNA] (ISOFORM 1)</scope>
    <scope>FUNCTION</scope>
    <scope>TISSUE SPECIFICITY</scope>
    <scope>VARIANT SER-99</scope>
    <source>
        <tissue>Lymphocyte</tissue>
    </source>
</reference>
<reference key="2">
    <citation type="submission" date="1999-04" db="EMBL/GenBank/DDBJ databases">
        <title>Novel human cell membrane protein.</title>
        <authorList>
            <person name="Zhang W."/>
            <person name="Wan T."/>
            <person name="Cao X."/>
        </authorList>
    </citation>
    <scope>NUCLEOTIDE SEQUENCE [MRNA] (ISOFORM 1)</scope>
</reference>
<reference key="3">
    <citation type="journal article" date="2004" name="Nat. Genet.">
        <title>Complete sequencing and characterization of 21,243 full-length human cDNAs.</title>
        <authorList>
            <person name="Ota T."/>
            <person name="Suzuki Y."/>
            <person name="Nishikawa T."/>
            <person name="Otsuki T."/>
            <person name="Sugiyama T."/>
            <person name="Irie R."/>
            <person name="Wakamatsu A."/>
            <person name="Hayashi K."/>
            <person name="Sato H."/>
            <person name="Nagai K."/>
            <person name="Kimura K."/>
            <person name="Makita H."/>
            <person name="Sekine M."/>
            <person name="Obayashi M."/>
            <person name="Nishi T."/>
            <person name="Shibahara T."/>
            <person name="Tanaka T."/>
            <person name="Ishii S."/>
            <person name="Yamamoto J."/>
            <person name="Saito K."/>
            <person name="Kawai Y."/>
            <person name="Isono Y."/>
            <person name="Nakamura Y."/>
            <person name="Nagahari K."/>
            <person name="Murakami K."/>
            <person name="Yasuda T."/>
            <person name="Iwayanagi T."/>
            <person name="Wagatsuma M."/>
            <person name="Shiratori A."/>
            <person name="Sudo H."/>
            <person name="Hosoiri T."/>
            <person name="Kaku Y."/>
            <person name="Kodaira H."/>
            <person name="Kondo H."/>
            <person name="Sugawara M."/>
            <person name="Takahashi M."/>
            <person name="Kanda K."/>
            <person name="Yokoi T."/>
            <person name="Furuya T."/>
            <person name="Kikkawa E."/>
            <person name="Omura Y."/>
            <person name="Abe K."/>
            <person name="Kamihara K."/>
            <person name="Katsuta N."/>
            <person name="Sato K."/>
            <person name="Tanikawa M."/>
            <person name="Yamazaki M."/>
            <person name="Ninomiya K."/>
            <person name="Ishibashi T."/>
            <person name="Yamashita H."/>
            <person name="Murakawa K."/>
            <person name="Fujimori K."/>
            <person name="Tanai H."/>
            <person name="Kimata M."/>
            <person name="Watanabe M."/>
            <person name="Hiraoka S."/>
            <person name="Chiba Y."/>
            <person name="Ishida S."/>
            <person name="Ono Y."/>
            <person name="Takiguchi S."/>
            <person name="Watanabe S."/>
            <person name="Yosida M."/>
            <person name="Hotuta T."/>
            <person name="Kusano J."/>
            <person name="Kanehori K."/>
            <person name="Takahashi-Fujii A."/>
            <person name="Hara H."/>
            <person name="Tanase T.-O."/>
            <person name="Nomura Y."/>
            <person name="Togiya S."/>
            <person name="Komai F."/>
            <person name="Hara R."/>
            <person name="Takeuchi K."/>
            <person name="Arita M."/>
            <person name="Imose N."/>
            <person name="Musashino K."/>
            <person name="Yuuki H."/>
            <person name="Oshima A."/>
            <person name="Sasaki N."/>
            <person name="Aotsuka S."/>
            <person name="Yoshikawa Y."/>
            <person name="Matsunawa H."/>
            <person name="Ichihara T."/>
            <person name="Shiohata N."/>
            <person name="Sano S."/>
            <person name="Moriya S."/>
            <person name="Momiyama H."/>
            <person name="Satoh N."/>
            <person name="Takami S."/>
            <person name="Terashima Y."/>
            <person name="Suzuki O."/>
            <person name="Nakagawa S."/>
            <person name="Senoh A."/>
            <person name="Mizoguchi H."/>
            <person name="Goto Y."/>
            <person name="Shimizu F."/>
            <person name="Wakebe H."/>
            <person name="Hishigaki H."/>
            <person name="Watanabe T."/>
            <person name="Sugiyama A."/>
            <person name="Takemoto M."/>
            <person name="Kawakami B."/>
            <person name="Yamazaki M."/>
            <person name="Watanabe K."/>
            <person name="Kumagai A."/>
            <person name="Itakura S."/>
            <person name="Fukuzumi Y."/>
            <person name="Fujimori Y."/>
            <person name="Komiyama M."/>
            <person name="Tashiro H."/>
            <person name="Tanigami A."/>
            <person name="Fujiwara T."/>
            <person name="Ono T."/>
            <person name="Yamada K."/>
            <person name="Fujii Y."/>
            <person name="Ozaki K."/>
            <person name="Hirao M."/>
            <person name="Ohmori Y."/>
            <person name="Kawabata A."/>
            <person name="Hikiji T."/>
            <person name="Kobatake N."/>
            <person name="Inagaki H."/>
            <person name="Ikema Y."/>
            <person name="Okamoto S."/>
            <person name="Okitani R."/>
            <person name="Kawakami T."/>
            <person name="Noguchi S."/>
            <person name="Itoh T."/>
            <person name="Shigeta K."/>
            <person name="Senba T."/>
            <person name="Matsumura K."/>
            <person name="Nakajima Y."/>
            <person name="Mizuno T."/>
            <person name="Morinaga M."/>
            <person name="Sasaki M."/>
            <person name="Togashi T."/>
            <person name="Oyama M."/>
            <person name="Hata H."/>
            <person name="Watanabe M."/>
            <person name="Komatsu T."/>
            <person name="Mizushima-Sugano J."/>
            <person name="Satoh T."/>
            <person name="Shirai Y."/>
            <person name="Takahashi Y."/>
            <person name="Nakagawa K."/>
            <person name="Okumura K."/>
            <person name="Nagase T."/>
            <person name="Nomura N."/>
            <person name="Kikuchi H."/>
            <person name="Masuho Y."/>
            <person name="Yamashita R."/>
            <person name="Nakai K."/>
            <person name="Yada T."/>
            <person name="Nakamura Y."/>
            <person name="Ohara O."/>
            <person name="Isogai T."/>
            <person name="Sugano S."/>
        </authorList>
    </citation>
    <scope>NUCLEOTIDE SEQUENCE [LARGE SCALE MRNA] (ISOFORM 1)</scope>
    <source>
        <tissue>Mammary gland</tissue>
    </source>
</reference>
<reference key="4">
    <citation type="journal article" date="2006" name="Nature">
        <title>The DNA sequence and biological annotation of human chromosome 1.</title>
        <authorList>
            <person name="Gregory S.G."/>
            <person name="Barlow K.F."/>
            <person name="McLay K.E."/>
            <person name="Kaul R."/>
            <person name="Swarbreck D."/>
            <person name="Dunham A."/>
            <person name="Scott C.E."/>
            <person name="Howe K.L."/>
            <person name="Woodfine K."/>
            <person name="Spencer C.C.A."/>
            <person name="Jones M.C."/>
            <person name="Gillson C."/>
            <person name="Searle S."/>
            <person name="Zhou Y."/>
            <person name="Kokocinski F."/>
            <person name="McDonald L."/>
            <person name="Evans R."/>
            <person name="Phillips K."/>
            <person name="Atkinson A."/>
            <person name="Cooper R."/>
            <person name="Jones C."/>
            <person name="Hall R.E."/>
            <person name="Andrews T.D."/>
            <person name="Lloyd C."/>
            <person name="Ainscough R."/>
            <person name="Almeida J.P."/>
            <person name="Ambrose K.D."/>
            <person name="Anderson F."/>
            <person name="Andrew R.W."/>
            <person name="Ashwell R.I.S."/>
            <person name="Aubin K."/>
            <person name="Babbage A.K."/>
            <person name="Bagguley C.L."/>
            <person name="Bailey J."/>
            <person name="Beasley H."/>
            <person name="Bethel G."/>
            <person name="Bird C.P."/>
            <person name="Bray-Allen S."/>
            <person name="Brown J.Y."/>
            <person name="Brown A.J."/>
            <person name="Buckley D."/>
            <person name="Burton J."/>
            <person name="Bye J."/>
            <person name="Carder C."/>
            <person name="Chapman J.C."/>
            <person name="Clark S.Y."/>
            <person name="Clarke G."/>
            <person name="Clee C."/>
            <person name="Cobley V."/>
            <person name="Collier R.E."/>
            <person name="Corby N."/>
            <person name="Coville G.J."/>
            <person name="Davies J."/>
            <person name="Deadman R."/>
            <person name="Dunn M."/>
            <person name="Earthrowl M."/>
            <person name="Ellington A.G."/>
            <person name="Errington H."/>
            <person name="Frankish A."/>
            <person name="Frankland J."/>
            <person name="French L."/>
            <person name="Garner P."/>
            <person name="Garnett J."/>
            <person name="Gay L."/>
            <person name="Ghori M.R.J."/>
            <person name="Gibson R."/>
            <person name="Gilby L.M."/>
            <person name="Gillett W."/>
            <person name="Glithero R.J."/>
            <person name="Grafham D.V."/>
            <person name="Griffiths C."/>
            <person name="Griffiths-Jones S."/>
            <person name="Grocock R."/>
            <person name="Hammond S."/>
            <person name="Harrison E.S.I."/>
            <person name="Hart E."/>
            <person name="Haugen E."/>
            <person name="Heath P.D."/>
            <person name="Holmes S."/>
            <person name="Holt K."/>
            <person name="Howden P.J."/>
            <person name="Hunt A.R."/>
            <person name="Hunt S.E."/>
            <person name="Hunter G."/>
            <person name="Isherwood J."/>
            <person name="James R."/>
            <person name="Johnson C."/>
            <person name="Johnson D."/>
            <person name="Joy A."/>
            <person name="Kay M."/>
            <person name="Kershaw J.K."/>
            <person name="Kibukawa M."/>
            <person name="Kimberley A.M."/>
            <person name="King A."/>
            <person name="Knights A.J."/>
            <person name="Lad H."/>
            <person name="Laird G."/>
            <person name="Lawlor S."/>
            <person name="Leongamornlert D.A."/>
            <person name="Lloyd D.M."/>
            <person name="Loveland J."/>
            <person name="Lovell J."/>
            <person name="Lush M.J."/>
            <person name="Lyne R."/>
            <person name="Martin S."/>
            <person name="Mashreghi-Mohammadi M."/>
            <person name="Matthews L."/>
            <person name="Matthews N.S.W."/>
            <person name="McLaren S."/>
            <person name="Milne S."/>
            <person name="Mistry S."/>
            <person name="Moore M.J.F."/>
            <person name="Nickerson T."/>
            <person name="O'Dell C.N."/>
            <person name="Oliver K."/>
            <person name="Palmeiri A."/>
            <person name="Palmer S.A."/>
            <person name="Parker A."/>
            <person name="Patel D."/>
            <person name="Pearce A.V."/>
            <person name="Peck A.I."/>
            <person name="Pelan S."/>
            <person name="Phelps K."/>
            <person name="Phillimore B.J."/>
            <person name="Plumb R."/>
            <person name="Rajan J."/>
            <person name="Raymond C."/>
            <person name="Rouse G."/>
            <person name="Saenphimmachak C."/>
            <person name="Sehra H.K."/>
            <person name="Sheridan E."/>
            <person name="Shownkeen R."/>
            <person name="Sims S."/>
            <person name="Skuce C.D."/>
            <person name="Smith M."/>
            <person name="Steward C."/>
            <person name="Subramanian S."/>
            <person name="Sycamore N."/>
            <person name="Tracey A."/>
            <person name="Tromans A."/>
            <person name="Van Helmond Z."/>
            <person name="Wall M."/>
            <person name="Wallis J.M."/>
            <person name="White S."/>
            <person name="Whitehead S.L."/>
            <person name="Wilkinson J.E."/>
            <person name="Willey D.L."/>
            <person name="Williams H."/>
            <person name="Wilming L."/>
            <person name="Wray P.W."/>
            <person name="Wu Z."/>
            <person name="Coulson A."/>
            <person name="Vaudin M."/>
            <person name="Sulston J.E."/>
            <person name="Durbin R.M."/>
            <person name="Hubbard T."/>
            <person name="Wooster R."/>
            <person name="Dunham I."/>
            <person name="Carter N.P."/>
            <person name="McVean G."/>
            <person name="Ross M.T."/>
            <person name="Harrow J."/>
            <person name="Olson M.V."/>
            <person name="Beck S."/>
            <person name="Rogers J."/>
            <person name="Bentley D.R."/>
        </authorList>
    </citation>
    <scope>NUCLEOTIDE SEQUENCE [LARGE SCALE GENOMIC DNA]</scope>
</reference>
<reference key="5">
    <citation type="journal article" date="2004" name="Genome Res.">
        <title>The status, quality, and expansion of the NIH full-length cDNA project: the Mammalian Gene Collection (MGC).</title>
        <authorList>
            <consortium name="The MGC Project Team"/>
        </authorList>
    </citation>
    <scope>NUCLEOTIDE SEQUENCE [LARGE SCALE MRNA] (ISOFORM 1)</scope>
</reference>
<reference key="6">
    <citation type="journal article" date="2004" name="Protein Sci.">
        <title>Signal peptide prediction based on analysis of experimentally verified cleavage sites.</title>
        <authorList>
            <person name="Zhang Z."/>
            <person name="Henzel W.J."/>
        </authorList>
    </citation>
    <scope>PROTEIN SEQUENCE OF 23-37</scope>
</reference>
<dbReference type="EMBL" id="AF146761">
    <property type="protein sequence ID" value="AAF67470.1"/>
    <property type="molecule type" value="mRNA"/>
</dbReference>
<dbReference type="EMBL" id="AK074669">
    <property type="protein sequence ID" value="BAC11123.1"/>
    <property type="molecule type" value="mRNA"/>
</dbReference>
<dbReference type="EMBL" id="AL590560">
    <property type="status" value="NOT_ANNOTATED_CDS"/>
    <property type="molecule type" value="Genomic_DNA"/>
</dbReference>
<dbReference type="EMBL" id="BC109194">
    <property type="protein sequence ID" value="AAI09195.1"/>
    <property type="molecule type" value="mRNA"/>
</dbReference>
<dbReference type="CCDS" id="CCDS1188.1">
    <molecule id="Q9P0V8-1"/>
</dbReference>
<dbReference type="CCDS" id="CCDS81387.1">
    <molecule id="Q9P0V8-2"/>
</dbReference>
<dbReference type="RefSeq" id="NP_001317670.1">
    <molecule id="Q9P0V8-2"/>
    <property type="nucleotide sequence ID" value="NM_001330741.2"/>
</dbReference>
<dbReference type="RefSeq" id="NP_064510.1">
    <molecule id="Q9P0V8-1"/>
    <property type="nucleotide sequence ID" value="NM_020125.3"/>
</dbReference>
<dbReference type="SMR" id="Q9P0V8"/>
<dbReference type="BioGRID" id="121206">
    <property type="interactions" value="18"/>
</dbReference>
<dbReference type="FunCoup" id="Q9P0V8">
    <property type="interactions" value="19"/>
</dbReference>
<dbReference type="IntAct" id="Q9P0V8">
    <property type="interactions" value="13"/>
</dbReference>
<dbReference type="STRING" id="9606.ENSP00000289707"/>
<dbReference type="GlyCosmos" id="Q9P0V8">
    <property type="glycosylation" value="1 site, No reported glycans"/>
</dbReference>
<dbReference type="GlyGen" id="Q9P0V8">
    <property type="glycosylation" value="2 sites, 1 O-linked glycan (1 site)"/>
</dbReference>
<dbReference type="BioMuta" id="SLAMF8"/>
<dbReference type="DMDM" id="67461583"/>
<dbReference type="MassIVE" id="Q9P0V8"/>
<dbReference type="PaxDb" id="9606-ENSP00000289707"/>
<dbReference type="PeptideAtlas" id="Q9P0V8"/>
<dbReference type="ProteomicsDB" id="83604">
    <molecule id="Q9P0V8-1"/>
</dbReference>
<dbReference type="ProteomicsDB" id="83605">
    <molecule id="Q9P0V8-2"/>
</dbReference>
<dbReference type="Antibodypedia" id="47059">
    <property type="antibodies" value="301 antibodies from 30 providers"/>
</dbReference>
<dbReference type="CPTC" id="Q9P0V8">
    <property type="antibodies" value="1 antibody"/>
</dbReference>
<dbReference type="DNASU" id="56833"/>
<dbReference type="Ensembl" id="ENST00000289707.10">
    <molecule id="Q9P0V8-1"/>
    <property type="protein sequence ID" value="ENSP00000289707.5"/>
    <property type="gene ID" value="ENSG00000158714.11"/>
</dbReference>
<dbReference type="Ensembl" id="ENST00000368104.4">
    <molecule id="Q9P0V8-2"/>
    <property type="protein sequence ID" value="ENSP00000357084.4"/>
    <property type="gene ID" value="ENSG00000158714.11"/>
</dbReference>
<dbReference type="GeneID" id="56833"/>
<dbReference type="KEGG" id="hsa:56833"/>
<dbReference type="MANE-Select" id="ENST00000289707.10">
    <property type="protein sequence ID" value="ENSP00000289707.5"/>
    <property type="RefSeq nucleotide sequence ID" value="NM_020125.3"/>
    <property type="RefSeq protein sequence ID" value="NP_064510.1"/>
</dbReference>
<dbReference type="UCSC" id="uc001fue.5">
    <molecule id="Q9P0V8-1"/>
    <property type="organism name" value="human"/>
</dbReference>
<dbReference type="AGR" id="HGNC:21391"/>
<dbReference type="CTD" id="56833"/>
<dbReference type="DisGeNET" id="56833"/>
<dbReference type="GeneCards" id="SLAMF8"/>
<dbReference type="HGNC" id="HGNC:21391">
    <property type="gene designation" value="SLAMF8"/>
</dbReference>
<dbReference type="HPA" id="ENSG00000158714">
    <property type="expression patterns" value="Tissue enhanced (lymphoid)"/>
</dbReference>
<dbReference type="MIM" id="606620">
    <property type="type" value="gene"/>
</dbReference>
<dbReference type="neXtProt" id="NX_Q9P0V8"/>
<dbReference type="OpenTargets" id="ENSG00000158714"/>
<dbReference type="PharmGKB" id="PA134983606"/>
<dbReference type="VEuPathDB" id="HostDB:ENSG00000158714"/>
<dbReference type="eggNOG" id="ENOG502S183">
    <property type="taxonomic scope" value="Eukaryota"/>
</dbReference>
<dbReference type="GeneTree" id="ENSGT01030000234540"/>
<dbReference type="HOGENOM" id="CLU_083521_1_0_1"/>
<dbReference type="InParanoid" id="Q9P0V8"/>
<dbReference type="OMA" id="RREGTMD"/>
<dbReference type="OrthoDB" id="8963224at2759"/>
<dbReference type="PAN-GO" id="Q9P0V8">
    <property type="GO annotations" value="3 GO annotations based on evolutionary models"/>
</dbReference>
<dbReference type="PhylomeDB" id="Q9P0V8"/>
<dbReference type="TreeFam" id="TF334964"/>
<dbReference type="PathwayCommons" id="Q9P0V8"/>
<dbReference type="SignaLink" id="Q9P0V8"/>
<dbReference type="BioGRID-ORCS" id="56833">
    <property type="hits" value="6 hits in 1138 CRISPR screens"/>
</dbReference>
<dbReference type="GeneWiki" id="SLAMF8"/>
<dbReference type="GenomeRNAi" id="56833"/>
<dbReference type="Pharos" id="Q9P0V8">
    <property type="development level" value="Tbio"/>
</dbReference>
<dbReference type="PRO" id="PR:Q9P0V8"/>
<dbReference type="Proteomes" id="UP000005640">
    <property type="component" value="Chromosome 1"/>
</dbReference>
<dbReference type="RNAct" id="Q9P0V8">
    <property type="molecule type" value="protein"/>
</dbReference>
<dbReference type="Bgee" id="ENSG00000158714">
    <property type="expression patterns" value="Expressed in vermiform appendix and 153 other cell types or tissues"/>
</dbReference>
<dbReference type="GO" id="GO:0009986">
    <property type="term" value="C:cell surface"/>
    <property type="evidence" value="ECO:0000303"/>
    <property type="project" value="UniProtKB"/>
</dbReference>
<dbReference type="GO" id="GO:0016020">
    <property type="term" value="C:membrane"/>
    <property type="evidence" value="ECO:0007669"/>
    <property type="project" value="UniProtKB-SubCell"/>
</dbReference>
<dbReference type="GO" id="GO:0042802">
    <property type="term" value="F:identical protein binding"/>
    <property type="evidence" value="ECO:0000250"/>
    <property type="project" value="UniProtKB"/>
</dbReference>
<dbReference type="GO" id="GO:0038023">
    <property type="term" value="F:signaling receptor activity"/>
    <property type="evidence" value="ECO:0000250"/>
    <property type="project" value="UniProtKB"/>
</dbReference>
<dbReference type="GO" id="GO:0002336">
    <property type="term" value="P:B-1 B cell lineage commitment"/>
    <property type="evidence" value="ECO:0000250"/>
    <property type="project" value="UniProtKB"/>
</dbReference>
<dbReference type="GO" id="GO:0042742">
    <property type="term" value="P:defense response to bacterium"/>
    <property type="evidence" value="ECO:0000250"/>
    <property type="project" value="UniProtKB"/>
</dbReference>
<dbReference type="GO" id="GO:0006955">
    <property type="term" value="P:immune response"/>
    <property type="evidence" value="ECO:0000318"/>
    <property type="project" value="GO_Central"/>
</dbReference>
<dbReference type="GO" id="GO:0002232">
    <property type="term" value="P:leukocyte chemotaxis involved in inflammatory response"/>
    <property type="evidence" value="ECO:0000250"/>
    <property type="project" value="UniProtKB"/>
</dbReference>
<dbReference type="GO" id="GO:2000509">
    <property type="term" value="P:negative regulation of dendritic cell chemotaxis"/>
    <property type="evidence" value="ECO:0000250"/>
    <property type="project" value="UniProtKB"/>
</dbReference>
<dbReference type="GO" id="GO:0010760">
    <property type="term" value="P:negative regulation of macrophage chemotaxis"/>
    <property type="evidence" value="ECO:0000250"/>
    <property type="project" value="UniProtKB"/>
</dbReference>
<dbReference type="GO" id="GO:0090027">
    <property type="term" value="P:negative regulation of monocyte chemotaxis"/>
    <property type="evidence" value="ECO:0000250"/>
    <property type="project" value="UniProtKB"/>
</dbReference>
<dbReference type="GO" id="GO:1902623">
    <property type="term" value="P:negative regulation of neutrophil migration"/>
    <property type="evidence" value="ECO:0000250"/>
    <property type="project" value="UniProtKB"/>
</dbReference>
<dbReference type="GO" id="GO:0060266">
    <property type="term" value="P:negative regulation of respiratory burst involved in inflammatory response"/>
    <property type="evidence" value="ECO:0000250"/>
    <property type="project" value="UniProtKB"/>
</dbReference>
<dbReference type="GO" id="GO:0090383">
    <property type="term" value="P:phagosome acidification"/>
    <property type="evidence" value="ECO:0000250"/>
    <property type="project" value="UniProtKB"/>
</dbReference>
<dbReference type="GO" id="GO:0045577">
    <property type="term" value="P:regulation of B cell differentiation"/>
    <property type="evidence" value="ECO:0000250"/>
    <property type="project" value="UniProtKB"/>
</dbReference>
<dbReference type="FunFam" id="2.60.40.10:FF:001635">
    <property type="entry name" value="SLAM family member 8"/>
    <property type="match status" value="1"/>
</dbReference>
<dbReference type="FunFam" id="2.60.40.10:FF:001955">
    <property type="entry name" value="SLAM family member 8"/>
    <property type="match status" value="1"/>
</dbReference>
<dbReference type="Gene3D" id="2.60.40.10">
    <property type="entry name" value="Immunoglobulins"/>
    <property type="match status" value="2"/>
</dbReference>
<dbReference type="InterPro" id="IPR015631">
    <property type="entry name" value="CD2/SLAM_rcpt"/>
</dbReference>
<dbReference type="InterPro" id="IPR007110">
    <property type="entry name" value="Ig-like_dom"/>
</dbReference>
<dbReference type="InterPro" id="IPR036179">
    <property type="entry name" value="Ig-like_dom_sf"/>
</dbReference>
<dbReference type="InterPro" id="IPR013783">
    <property type="entry name" value="Ig-like_fold"/>
</dbReference>
<dbReference type="PANTHER" id="PTHR12080">
    <property type="entry name" value="SIGNALING LYMPHOCYTIC ACTIVATION MOLECULE"/>
    <property type="match status" value="1"/>
</dbReference>
<dbReference type="PANTHER" id="PTHR12080:SF92">
    <property type="entry name" value="SLAM FAMILY MEMBER 8"/>
    <property type="match status" value="1"/>
</dbReference>
<dbReference type="SUPFAM" id="SSF48726">
    <property type="entry name" value="Immunoglobulin"/>
    <property type="match status" value="2"/>
</dbReference>
<dbReference type="PROSITE" id="PS50835">
    <property type="entry name" value="IG_LIKE"/>
    <property type="match status" value="1"/>
</dbReference>
<protein>
    <recommendedName>
        <fullName>SLAM family member 8</fullName>
    </recommendedName>
    <alternativeName>
        <fullName>B-lymphocyte activator macrophage expressed</fullName>
    </alternativeName>
    <alternativeName>
        <fullName>BCM-like membrane protein</fullName>
    </alternativeName>
    <cdAntigenName>CD353</cdAntigenName>
</protein>
<organism>
    <name type="scientific">Homo sapiens</name>
    <name type="common">Human</name>
    <dbReference type="NCBI Taxonomy" id="9606"/>
    <lineage>
        <taxon>Eukaryota</taxon>
        <taxon>Metazoa</taxon>
        <taxon>Chordata</taxon>
        <taxon>Craniata</taxon>
        <taxon>Vertebrata</taxon>
        <taxon>Euteleostomi</taxon>
        <taxon>Mammalia</taxon>
        <taxon>Eutheria</taxon>
        <taxon>Euarchontoglires</taxon>
        <taxon>Primates</taxon>
        <taxon>Haplorrhini</taxon>
        <taxon>Catarrhini</taxon>
        <taxon>Hominidae</taxon>
        <taxon>Homo</taxon>
    </lineage>
</organism>
<sequence>MVMRPLWSLLLWEALLPITVTGAQVLSKVGGSVLLVAARPPGFQVREAIWRSLWPSEELLATFFRGSLETLYHSRFLGRAQLHSNLSLELGPLESGDSGNFSVLMVDTRGQPWTQTLQLKVYDAVPRPVVQVFIAVERDAQPSKTCQVFLSCWAPNISEITYSWRRETTMDFGMEPHSLFTDGQVLSISLGPGDRDVAYSCIVSNPVSWDLATVTPWDSCHHEAAPGKASYKDVLLVVVPVSLLLMLVTLFSAWHWCPCSGKKKKDVHADRVGPETENPLVQDLP</sequence>
<comment type="function">
    <text evidence="4">May play a role in B-lineage commitment and/or modulation of signaling through the B-cell receptor.</text>
</comment>
<comment type="interaction">
    <interactant intactId="EBI-18164173">
        <id>Q9P0V8</id>
    </interactant>
    <interactant intactId="EBI-3907816">
        <id>P54852</id>
        <label>EMP3</label>
    </interactant>
    <organismsDiffer>false</organismsDiffer>
    <experiments>3</experiments>
</comment>
<comment type="interaction">
    <interactant intactId="EBI-18164173">
        <id>Q9P0V8</id>
    </interactant>
    <interactant intactId="EBI-13644267">
        <id>Q8N335</id>
        <label>GPD1L</label>
    </interactant>
    <organismsDiffer>false</organismsDiffer>
    <experiments>2</experiments>
</comment>
<comment type="interaction">
    <interactant intactId="EBI-18164173">
        <id>Q9P0V8</id>
    </interactant>
    <interactant intactId="EBI-10317425">
        <id>Q9NZG7</id>
        <label>NINJ2</label>
    </interactant>
    <organismsDiffer>false</organismsDiffer>
    <experiments>3</experiments>
</comment>
<comment type="subcellular location">
    <subcellularLocation>
        <location>Membrane</location>
        <topology>Single-pass type I membrane protein</topology>
    </subcellularLocation>
</comment>
<comment type="alternative products">
    <event type="alternative splicing"/>
    <isoform>
        <id>Q9P0V8-1</id>
        <name>1</name>
        <sequence type="displayed"/>
    </isoform>
    <isoform>
        <id>Q9P0V8-2</id>
        <name>2</name>
        <sequence type="described" ref="VSP_013896"/>
    </isoform>
</comment>
<comment type="tissue specificity">
    <text evidence="4">Expressed in lymph node, spleen, thymus and bone marrow.</text>
</comment>
<name>SLAF8_HUMAN</name>